<organism>
    <name type="scientific">Salmonella schwarzengrund (strain CVM19633)</name>
    <dbReference type="NCBI Taxonomy" id="439843"/>
    <lineage>
        <taxon>Bacteria</taxon>
        <taxon>Pseudomonadati</taxon>
        <taxon>Pseudomonadota</taxon>
        <taxon>Gammaproteobacteria</taxon>
        <taxon>Enterobacterales</taxon>
        <taxon>Enterobacteriaceae</taxon>
        <taxon>Salmonella</taxon>
    </lineage>
</organism>
<keyword id="KW-0963">Cytoplasm</keyword>
<keyword id="KW-0456">Lyase</keyword>
<keyword id="KW-0479">Metal-binding</keyword>
<keyword id="KW-0684">Rhamnose metabolism</keyword>
<keyword id="KW-0862">Zinc</keyword>
<reference key="1">
    <citation type="journal article" date="2011" name="J. Bacteriol.">
        <title>Comparative genomics of 28 Salmonella enterica isolates: evidence for CRISPR-mediated adaptive sublineage evolution.</title>
        <authorList>
            <person name="Fricke W.F."/>
            <person name="Mammel M.K."/>
            <person name="McDermott P.F."/>
            <person name="Tartera C."/>
            <person name="White D.G."/>
            <person name="Leclerc J.E."/>
            <person name="Ravel J."/>
            <person name="Cebula T.A."/>
        </authorList>
    </citation>
    <scope>NUCLEOTIDE SEQUENCE [LARGE SCALE GENOMIC DNA]</scope>
    <source>
        <strain>CVM19633</strain>
    </source>
</reference>
<protein>
    <recommendedName>
        <fullName evidence="1">Rhamnulose-1-phosphate aldolase</fullName>
        <ecNumber evidence="1">4.1.2.19</ecNumber>
    </recommendedName>
</protein>
<proteinExistence type="inferred from homology"/>
<evidence type="ECO:0000255" key="1">
    <source>
        <dbReference type="HAMAP-Rule" id="MF_00770"/>
    </source>
</evidence>
<dbReference type="EC" id="4.1.2.19" evidence="1"/>
<dbReference type="EMBL" id="CP001127">
    <property type="protein sequence ID" value="ACF90593.1"/>
    <property type="molecule type" value="Genomic_DNA"/>
</dbReference>
<dbReference type="RefSeq" id="WP_001179696.1">
    <property type="nucleotide sequence ID" value="NC_011094.1"/>
</dbReference>
<dbReference type="SMR" id="B4TPQ6"/>
<dbReference type="KEGG" id="sew:SeSA_A4259"/>
<dbReference type="HOGENOM" id="CLU_076831_0_0_6"/>
<dbReference type="UniPathway" id="UPA00541">
    <property type="reaction ID" value="UER00603"/>
</dbReference>
<dbReference type="Proteomes" id="UP000001865">
    <property type="component" value="Chromosome"/>
</dbReference>
<dbReference type="GO" id="GO:0005829">
    <property type="term" value="C:cytosol"/>
    <property type="evidence" value="ECO:0007669"/>
    <property type="project" value="TreeGrafter"/>
</dbReference>
<dbReference type="GO" id="GO:0046872">
    <property type="term" value="F:metal ion binding"/>
    <property type="evidence" value="ECO:0007669"/>
    <property type="project" value="UniProtKB-KW"/>
</dbReference>
<dbReference type="GO" id="GO:0008994">
    <property type="term" value="F:rhamnulose-1-phosphate aldolase activity"/>
    <property type="evidence" value="ECO:0007669"/>
    <property type="project" value="UniProtKB-UniRule"/>
</dbReference>
<dbReference type="GO" id="GO:0019323">
    <property type="term" value="P:pentose catabolic process"/>
    <property type="evidence" value="ECO:0007669"/>
    <property type="project" value="TreeGrafter"/>
</dbReference>
<dbReference type="GO" id="GO:0019301">
    <property type="term" value="P:rhamnose catabolic process"/>
    <property type="evidence" value="ECO:0007669"/>
    <property type="project" value="UniProtKB-UniRule"/>
</dbReference>
<dbReference type="CDD" id="cd00398">
    <property type="entry name" value="Aldolase_II"/>
    <property type="match status" value="1"/>
</dbReference>
<dbReference type="FunFam" id="3.40.225.10:FF:000006">
    <property type="entry name" value="Rhamnulose-1-phosphate aldolase"/>
    <property type="match status" value="1"/>
</dbReference>
<dbReference type="Gene3D" id="3.40.225.10">
    <property type="entry name" value="Class II aldolase/adducin N-terminal domain"/>
    <property type="match status" value="1"/>
</dbReference>
<dbReference type="HAMAP" id="MF_00770">
    <property type="entry name" value="RhaD"/>
    <property type="match status" value="1"/>
</dbReference>
<dbReference type="InterPro" id="IPR050197">
    <property type="entry name" value="Aldolase_class_II_sugar_metab"/>
</dbReference>
<dbReference type="InterPro" id="IPR001303">
    <property type="entry name" value="Aldolase_II/adducin_N"/>
</dbReference>
<dbReference type="InterPro" id="IPR036409">
    <property type="entry name" value="Aldolase_II/adducin_N_sf"/>
</dbReference>
<dbReference type="InterPro" id="IPR013447">
    <property type="entry name" value="Rhamnulose-1-P_Aldolase"/>
</dbReference>
<dbReference type="NCBIfam" id="NF002963">
    <property type="entry name" value="PRK03634.1"/>
    <property type="match status" value="1"/>
</dbReference>
<dbReference type="NCBIfam" id="TIGR02624">
    <property type="entry name" value="rhamnu_1P_ald"/>
    <property type="match status" value="1"/>
</dbReference>
<dbReference type="PANTHER" id="PTHR22789">
    <property type="entry name" value="FUCULOSE PHOSPHATE ALDOLASE"/>
    <property type="match status" value="1"/>
</dbReference>
<dbReference type="PANTHER" id="PTHR22789:SF16">
    <property type="entry name" value="RHAMNULOSE-1-PHOSPHATE ALDOLASE"/>
    <property type="match status" value="1"/>
</dbReference>
<dbReference type="Pfam" id="PF00596">
    <property type="entry name" value="Aldolase_II"/>
    <property type="match status" value="1"/>
</dbReference>
<dbReference type="SMART" id="SM01007">
    <property type="entry name" value="Aldolase_II"/>
    <property type="match status" value="1"/>
</dbReference>
<dbReference type="SUPFAM" id="SSF53639">
    <property type="entry name" value="AraD/HMP-PK domain-like"/>
    <property type="match status" value="1"/>
</dbReference>
<sequence>MQNITDSWFVQGMIKATSDAWLKGWDERNGGNLTLRLDETDIAPFAANFHEKPRYIALSQPMPLLANTPFIVTGSGKFFRNVQLDPAANLGVVKIDSDGAGYHILWGLTHDAVPTSELPAHFLSHCERIKATHGKDRVIMHCHATNLIALTYVLENNTALITRKLWEGSTECLVVFPDGVGILPWMVPGTDEIGQATAQEMQKHSLVLWPFHGVFGSGPTLDETFGLIDTAEKSAEVLVKIYSMGGMKQTITREELVALGKRFGVTPLASAVALY</sequence>
<name>RHAD_SALSV</name>
<gene>
    <name evidence="1" type="primary">rhaD</name>
    <name type="ordered locus">SeSA_A4259</name>
</gene>
<comment type="function">
    <text evidence="1">Catalyzes the reversible cleavage of L-rhamnulose-1-phosphate to dihydroxyacetone phosphate (DHAP) and L-lactaldehyde.</text>
</comment>
<comment type="catalytic activity">
    <reaction evidence="1">
        <text>L-rhamnulose 1-phosphate = (S)-lactaldehyde + dihydroxyacetone phosphate</text>
        <dbReference type="Rhea" id="RHEA:19689"/>
        <dbReference type="ChEBI" id="CHEBI:18041"/>
        <dbReference type="ChEBI" id="CHEBI:57642"/>
        <dbReference type="ChEBI" id="CHEBI:58313"/>
        <dbReference type="EC" id="4.1.2.19"/>
    </reaction>
</comment>
<comment type="cofactor">
    <cofactor evidence="1">
        <name>Zn(2+)</name>
        <dbReference type="ChEBI" id="CHEBI:29105"/>
    </cofactor>
    <text evidence="1">Binds 1 zinc ion per subunit.</text>
</comment>
<comment type="pathway">
    <text evidence="1">Carbohydrate degradation; L-rhamnose degradation; glycerone phosphate from L-rhamnose: step 3/3.</text>
</comment>
<comment type="subunit">
    <text evidence="1">Homotetramer.</text>
</comment>
<comment type="subcellular location">
    <subcellularLocation>
        <location evidence="1">Cytoplasm</location>
    </subcellularLocation>
</comment>
<comment type="similarity">
    <text evidence="1">Belongs to the aldolase class II family. RhaD subfamily.</text>
</comment>
<accession>B4TPQ6</accession>
<feature type="chain" id="PRO_1000193738" description="Rhamnulose-1-phosphate aldolase">
    <location>
        <begin position="1"/>
        <end position="275"/>
    </location>
</feature>
<feature type="active site" evidence="1">
    <location>
        <position position="117"/>
    </location>
</feature>
<feature type="binding site" evidence="1">
    <location>
        <position position="141"/>
    </location>
    <ligand>
        <name>Zn(2+)</name>
        <dbReference type="ChEBI" id="CHEBI:29105"/>
    </ligand>
</feature>
<feature type="binding site" evidence="1">
    <location>
        <position position="143"/>
    </location>
    <ligand>
        <name>Zn(2+)</name>
        <dbReference type="ChEBI" id="CHEBI:29105"/>
    </ligand>
</feature>
<feature type="binding site" evidence="1">
    <location>
        <position position="212"/>
    </location>
    <ligand>
        <name>Zn(2+)</name>
        <dbReference type="ChEBI" id="CHEBI:29105"/>
    </ligand>
</feature>